<comment type="function">
    <text evidence="1">The coatomer is a cytosolic protein complex that binds to dilysine motifs and reversibly associates with Golgi non-clathrin-coated vesicles, which further mediate biosynthetic protein transport from the ER, via the Golgi up to the trans Golgi network. Coatomer complex is required for budding from Golgi membranes, and is essential for the retrograde Golgi-to-ER transport of dilysine-tagged proteins (By similarity).</text>
</comment>
<comment type="subunit">
    <text evidence="1">Oligomeric complex that consists of at least the alpha, beta, beta', gamma, delta, epsilon and zeta subunits.</text>
</comment>
<comment type="subcellular location">
    <subcellularLocation>
        <location evidence="1">Cytoplasm</location>
    </subcellularLocation>
    <subcellularLocation>
        <location evidence="1">Golgi apparatus membrane</location>
        <topology evidence="1">Peripheral membrane protein</topology>
        <orientation evidence="1">Cytoplasmic side</orientation>
    </subcellularLocation>
    <subcellularLocation>
        <location evidence="1">Cytoplasmic vesicle</location>
        <location evidence="1">COPI-coated vesicle membrane</location>
        <topology evidence="1">Peripheral membrane protein</topology>
        <orientation evidence="1">Cytoplasmic side</orientation>
    </subcellularLocation>
    <text evidence="1">The coatomer is cytoplasmic or polymerized on the cytoplasmic side of the Golgi, as well as on the vesicles/buds originating from it.</text>
</comment>
<comment type="sequence caution" evidence="2">
    <conflict type="erroneous initiation">
        <sequence resource="EMBL-CDS" id="CAB45907"/>
    </conflict>
    <text>Extended N-terminus.</text>
</comment>
<comment type="sequence caution" evidence="2">
    <conflict type="erroneous initiation">
        <sequence resource="EMBL-CDS" id="CAB79866"/>
    </conflict>
    <text>Extended N-terminus.</text>
</comment>
<keyword id="KW-0963">Cytoplasm</keyword>
<keyword id="KW-0968">Cytoplasmic vesicle</keyword>
<keyword id="KW-0931">ER-Golgi transport</keyword>
<keyword id="KW-0333">Golgi apparatus</keyword>
<keyword id="KW-0472">Membrane</keyword>
<keyword id="KW-0653">Protein transport</keyword>
<keyword id="KW-1185">Reference proteome</keyword>
<keyword id="KW-0677">Repeat</keyword>
<keyword id="KW-0813">Transport</keyword>
<accession>Q9SV21</accession>
<gene>
    <name type="ordered locus">At4g31480</name>
    <name type="ORF">F3L17.50</name>
</gene>
<protein>
    <recommendedName>
        <fullName>Coatomer subunit beta-1</fullName>
    </recommendedName>
    <alternativeName>
        <fullName>Beta-coat protein 1</fullName>
        <shortName>Beta-COP 1</shortName>
    </alternativeName>
</protein>
<sequence length="948" mass="106145">MDKSSTMLVHYDKGTPAVANEIKEALEGNDVEAKVDAMKKAIMLLLNGETIPQLFITIIRYVLPSEDHTIQKLLLLYLELIEKTDSKGKVLPEMILICQNLRNNLQHPNEYIRGVTLRFLCRMKETEIVEPLTPSVLQNLEHRHPFVRRNAILAIMSIYKLPQGDQLFVDAPEMIEKVLSTEQDPSAKRNAFLMLFTCAEERAVNYLLSNVDKVSDWNESLQMVVLELIRSVCKTKPAEKGKYIKIIISLLSATSSAVIYECAGTLVSLSSAPTAIRAAANTYCQLLLSQSDNNVKLILLDRLYELKTLHRDIMVELIIDVLRALSSPNLDIRRKTLDISLDLITHHNINEVVQMLKKEVVKTQSGELEKNGEYRQMLIQAIHACAVKFPEVASTVVHLLMDFLGDSNVASALDVVVFVREIIETNPKLRVSIITRLLDTFYQIRAGKVCPCALWIIGEYCLSLSEVESGISTITQCLGELPFYSVSEESEPTETSKKIQPTSSAMVSSRKPVILADGTYATQSAASETTFSSPTVVQGSLTSGNLRALLLTGDFFLGAVVACTLTKLVLRLEEVQSSKTEVNKTVTQALLIMVSMLQLGQSPVSPHPIDNDSYERIVLCIKLLCHRNDEMKKIWLESCRQSFVKMISEKQLREMEELKAKTQTTHAQPDDLIDFFHLKSRKGMSQLELEDQVQDDLKRATGEFTKDENDANKLNRILQLTGFSDPVYAEAYVTVHHYDIALEVTVINRTKETLQNLCLELATMGDLKLVERPQNYSLAPERSMQIKANIKVSSTETGVIFGNIVYETSNVMERNVVVLNDIHIDIMDYISPAVCSEVAFRTMWAEFEWENKVAVNTTIQNEREFLDHIIKSTNMKCLTAPSAIEGECGFLAANLYAKSVFGEDALVNVSIEKQTDGALSGYIRIRSKTQGIALSLGDKITLKQKGSS</sequence>
<organism>
    <name type="scientific">Arabidopsis thaliana</name>
    <name type="common">Mouse-ear cress</name>
    <dbReference type="NCBI Taxonomy" id="3702"/>
    <lineage>
        <taxon>Eukaryota</taxon>
        <taxon>Viridiplantae</taxon>
        <taxon>Streptophyta</taxon>
        <taxon>Embryophyta</taxon>
        <taxon>Tracheophyta</taxon>
        <taxon>Spermatophyta</taxon>
        <taxon>Magnoliopsida</taxon>
        <taxon>eudicotyledons</taxon>
        <taxon>Gunneridae</taxon>
        <taxon>Pentapetalae</taxon>
        <taxon>rosids</taxon>
        <taxon>malvids</taxon>
        <taxon>Brassicales</taxon>
        <taxon>Brassicaceae</taxon>
        <taxon>Camelineae</taxon>
        <taxon>Arabidopsis</taxon>
    </lineage>
</organism>
<feature type="chain" id="PRO_0000285616" description="Coatomer subunit beta-1">
    <location>
        <begin position="1"/>
        <end position="948"/>
    </location>
</feature>
<feature type="repeat" description="HEAT 1">
    <location>
        <begin position="49"/>
        <end position="87"/>
    </location>
</feature>
<feature type="repeat" description="HEAT 2">
    <location>
        <begin position="92"/>
        <end position="126"/>
    </location>
</feature>
<feature type="repeat" description="HEAT 3">
    <location>
        <begin position="127"/>
        <end position="164"/>
    </location>
</feature>
<feature type="repeat" description="HEAT 4">
    <location>
        <begin position="274"/>
        <end position="311"/>
    </location>
</feature>
<feature type="repeat" description="HEAT 5">
    <location>
        <begin position="312"/>
        <end position="349"/>
    </location>
</feature>
<feature type="repeat" description="HEAT 6">
    <location>
        <begin position="391"/>
        <end position="428"/>
    </location>
</feature>
<proteinExistence type="inferred from homology"/>
<reference key="1">
    <citation type="journal article" date="1999" name="Nature">
        <title>Sequence and analysis of chromosome 4 of the plant Arabidopsis thaliana.</title>
        <authorList>
            <person name="Mayer K.F.X."/>
            <person name="Schueller C."/>
            <person name="Wambutt R."/>
            <person name="Murphy G."/>
            <person name="Volckaert G."/>
            <person name="Pohl T."/>
            <person name="Duesterhoeft A."/>
            <person name="Stiekema W."/>
            <person name="Entian K.-D."/>
            <person name="Terryn N."/>
            <person name="Harris B."/>
            <person name="Ansorge W."/>
            <person name="Brandt P."/>
            <person name="Grivell L.A."/>
            <person name="Rieger M."/>
            <person name="Weichselgartner M."/>
            <person name="de Simone V."/>
            <person name="Obermaier B."/>
            <person name="Mache R."/>
            <person name="Mueller M."/>
            <person name="Kreis M."/>
            <person name="Delseny M."/>
            <person name="Puigdomenech P."/>
            <person name="Watson M."/>
            <person name="Schmidtheini T."/>
            <person name="Reichert B."/>
            <person name="Portetelle D."/>
            <person name="Perez-Alonso M."/>
            <person name="Boutry M."/>
            <person name="Bancroft I."/>
            <person name="Vos P."/>
            <person name="Hoheisel J."/>
            <person name="Zimmermann W."/>
            <person name="Wedler H."/>
            <person name="Ridley P."/>
            <person name="Langham S.-A."/>
            <person name="McCullagh B."/>
            <person name="Bilham L."/>
            <person name="Robben J."/>
            <person name="van der Schueren J."/>
            <person name="Grymonprez B."/>
            <person name="Chuang Y.-J."/>
            <person name="Vandenbussche F."/>
            <person name="Braeken M."/>
            <person name="Weltjens I."/>
            <person name="Voet M."/>
            <person name="Bastiaens I."/>
            <person name="Aert R."/>
            <person name="Defoor E."/>
            <person name="Weitzenegger T."/>
            <person name="Bothe G."/>
            <person name="Ramsperger U."/>
            <person name="Hilbert H."/>
            <person name="Braun M."/>
            <person name="Holzer E."/>
            <person name="Brandt A."/>
            <person name="Peters S."/>
            <person name="van Staveren M."/>
            <person name="Dirkse W."/>
            <person name="Mooijman P."/>
            <person name="Klein Lankhorst R."/>
            <person name="Rose M."/>
            <person name="Hauf J."/>
            <person name="Koetter P."/>
            <person name="Berneiser S."/>
            <person name="Hempel S."/>
            <person name="Feldpausch M."/>
            <person name="Lamberth S."/>
            <person name="Van den Daele H."/>
            <person name="De Keyser A."/>
            <person name="Buysshaert C."/>
            <person name="Gielen J."/>
            <person name="Villarroel R."/>
            <person name="De Clercq R."/>
            <person name="van Montagu M."/>
            <person name="Rogers J."/>
            <person name="Cronin A."/>
            <person name="Quail M.A."/>
            <person name="Bray-Allen S."/>
            <person name="Clark L."/>
            <person name="Doggett J."/>
            <person name="Hall S."/>
            <person name="Kay M."/>
            <person name="Lennard N."/>
            <person name="McLay K."/>
            <person name="Mayes R."/>
            <person name="Pettett A."/>
            <person name="Rajandream M.A."/>
            <person name="Lyne M."/>
            <person name="Benes V."/>
            <person name="Rechmann S."/>
            <person name="Borkova D."/>
            <person name="Bloecker H."/>
            <person name="Scharfe M."/>
            <person name="Grimm M."/>
            <person name="Loehnert T.-H."/>
            <person name="Dose S."/>
            <person name="de Haan M."/>
            <person name="Maarse A.C."/>
            <person name="Schaefer M."/>
            <person name="Mueller-Auer S."/>
            <person name="Gabel C."/>
            <person name="Fuchs M."/>
            <person name="Fartmann B."/>
            <person name="Granderath K."/>
            <person name="Dauner D."/>
            <person name="Herzl A."/>
            <person name="Neumann S."/>
            <person name="Argiriou A."/>
            <person name="Vitale D."/>
            <person name="Liguori R."/>
            <person name="Piravandi E."/>
            <person name="Massenet O."/>
            <person name="Quigley F."/>
            <person name="Clabauld G."/>
            <person name="Muendlein A."/>
            <person name="Felber R."/>
            <person name="Schnabl S."/>
            <person name="Hiller R."/>
            <person name="Schmidt W."/>
            <person name="Lecharny A."/>
            <person name="Aubourg S."/>
            <person name="Chefdor F."/>
            <person name="Cooke R."/>
            <person name="Berger C."/>
            <person name="Monfort A."/>
            <person name="Casacuberta E."/>
            <person name="Gibbons T."/>
            <person name="Weber N."/>
            <person name="Vandenbol M."/>
            <person name="Bargues M."/>
            <person name="Terol J."/>
            <person name="Torres A."/>
            <person name="Perez-Perez A."/>
            <person name="Purnelle B."/>
            <person name="Bent E."/>
            <person name="Johnson S."/>
            <person name="Tacon D."/>
            <person name="Jesse T."/>
            <person name="Heijnen L."/>
            <person name="Schwarz S."/>
            <person name="Scholler P."/>
            <person name="Heber S."/>
            <person name="Francs P."/>
            <person name="Bielke C."/>
            <person name="Frishman D."/>
            <person name="Haase D."/>
            <person name="Lemcke K."/>
            <person name="Mewes H.-W."/>
            <person name="Stocker S."/>
            <person name="Zaccaria P."/>
            <person name="Bevan M."/>
            <person name="Wilson R.K."/>
            <person name="de la Bastide M."/>
            <person name="Habermann K."/>
            <person name="Parnell L."/>
            <person name="Dedhia N."/>
            <person name="Gnoj L."/>
            <person name="Schutz K."/>
            <person name="Huang E."/>
            <person name="Spiegel L."/>
            <person name="Sekhon M."/>
            <person name="Murray J."/>
            <person name="Sheet P."/>
            <person name="Cordes M."/>
            <person name="Abu-Threideh J."/>
            <person name="Stoneking T."/>
            <person name="Kalicki J."/>
            <person name="Graves T."/>
            <person name="Harmon G."/>
            <person name="Edwards J."/>
            <person name="Latreille P."/>
            <person name="Courtney L."/>
            <person name="Cloud J."/>
            <person name="Abbott A."/>
            <person name="Scott K."/>
            <person name="Johnson D."/>
            <person name="Minx P."/>
            <person name="Bentley D."/>
            <person name="Fulton B."/>
            <person name="Miller N."/>
            <person name="Greco T."/>
            <person name="Kemp K."/>
            <person name="Kramer J."/>
            <person name="Fulton L."/>
            <person name="Mardis E."/>
            <person name="Dante M."/>
            <person name="Pepin K."/>
            <person name="Hillier L.W."/>
            <person name="Nelson J."/>
            <person name="Spieth J."/>
            <person name="Ryan E."/>
            <person name="Andrews S."/>
            <person name="Geisel C."/>
            <person name="Layman D."/>
            <person name="Du H."/>
            <person name="Ali J."/>
            <person name="Berghoff A."/>
            <person name="Jones K."/>
            <person name="Drone K."/>
            <person name="Cotton M."/>
            <person name="Joshu C."/>
            <person name="Antonoiu B."/>
            <person name="Zidanic M."/>
            <person name="Strong C."/>
            <person name="Sun H."/>
            <person name="Lamar B."/>
            <person name="Yordan C."/>
            <person name="Ma P."/>
            <person name="Zhong J."/>
            <person name="Preston R."/>
            <person name="Vil D."/>
            <person name="Shekher M."/>
            <person name="Matero A."/>
            <person name="Shah R."/>
            <person name="Swaby I.K."/>
            <person name="O'Shaughnessy A."/>
            <person name="Rodriguez M."/>
            <person name="Hoffman J."/>
            <person name="Till S."/>
            <person name="Granat S."/>
            <person name="Shohdy N."/>
            <person name="Hasegawa A."/>
            <person name="Hameed A."/>
            <person name="Lodhi M."/>
            <person name="Johnson A."/>
            <person name="Chen E."/>
            <person name="Marra M.A."/>
            <person name="Martienssen R."/>
            <person name="McCombie W.R."/>
        </authorList>
    </citation>
    <scope>NUCLEOTIDE SEQUENCE [LARGE SCALE GENOMIC DNA]</scope>
    <source>
        <strain>cv. Columbia</strain>
    </source>
</reference>
<reference key="2">
    <citation type="journal article" date="2017" name="Plant J.">
        <title>Araport11: a complete reannotation of the Arabidopsis thaliana reference genome.</title>
        <authorList>
            <person name="Cheng C.Y."/>
            <person name="Krishnakumar V."/>
            <person name="Chan A.P."/>
            <person name="Thibaud-Nissen F."/>
            <person name="Schobel S."/>
            <person name="Town C.D."/>
        </authorList>
    </citation>
    <scope>GENOME REANNOTATION</scope>
    <source>
        <strain>cv. Columbia</strain>
    </source>
</reference>
<dbReference type="EMBL" id="AL080283">
    <property type="protein sequence ID" value="CAB45907.1"/>
    <property type="status" value="ALT_INIT"/>
    <property type="molecule type" value="Genomic_DNA"/>
</dbReference>
<dbReference type="EMBL" id="AL161579">
    <property type="protein sequence ID" value="CAB79866.1"/>
    <property type="status" value="ALT_INIT"/>
    <property type="molecule type" value="Genomic_DNA"/>
</dbReference>
<dbReference type="EMBL" id="CP002687">
    <property type="protein sequence ID" value="AEE85918.1"/>
    <property type="molecule type" value="Genomic_DNA"/>
</dbReference>
<dbReference type="EMBL" id="CP002687">
    <property type="protein sequence ID" value="AEE85919.1"/>
    <property type="molecule type" value="Genomic_DNA"/>
</dbReference>
<dbReference type="EMBL" id="CP002687">
    <property type="protein sequence ID" value="ANM66443.1"/>
    <property type="molecule type" value="Genomic_DNA"/>
</dbReference>
<dbReference type="EMBL" id="CP002687">
    <property type="protein sequence ID" value="ANM66444.1"/>
    <property type="molecule type" value="Genomic_DNA"/>
</dbReference>
<dbReference type="EMBL" id="CP002687">
    <property type="protein sequence ID" value="ANM66445.1"/>
    <property type="molecule type" value="Genomic_DNA"/>
</dbReference>
<dbReference type="EMBL" id="CP002687">
    <property type="protein sequence ID" value="ANM66446.1"/>
    <property type="molecule type" value="Genomic_DNA"/>
</dbReference>
<dbReference type="EMBL" id="CP002687">
    <property type="protein sequence ID" value="ANM66449.1"/>
    <property type="molecule type" value="Genomic_DNA"/>
</dbReference>
<dbReference type="PIR" id="T10678">
    <property type="entry name" value="T10678"/>
</dbReference>
<dbReference type="RefSeq" id="NP_001190880.1">
    <property type="nucleotide sequence ID" value="NM_001203951.1"/>
</dbReference>
<dbReference type="RefSeq" id="NP_001320104.1">
    <property type="nucleotide sequence ID" value="NM_001342082.1"/>
</dbReference>
<dbReference type="RefSeq" id="NP_001328337.1">
    <property type="nucleotide sequence ID" value="NM_001342088.1"/>
</dbReference>
<dbReference type="RefSeq" id="NP_001328338.1">
    <property type="nucleotide sequence ID" value="NM_001342084.1"/>
</dbReference>
<dbReference type="RefSeq" id="NP_001328339.1">
    <property type="nucleotide sequence ID" value="NM_001342087.1"/>
</dbReference>
<dbReference type="RefSeq" id="NP_001328340.1">
    <property type="nucleotide sequence ID" value="NM_001342086.1"/>
</dbReference>
<dbReference type="RefSeq" id="NP_001328341.1">
    <property type="nucleotide sequence ID" value="NM_001342083.1"/>
</dbReference>
<dbReference type="RefSeq" id="NP_001328342.1">
    <property type="nucleotide sequence ID" value="NM_001342085.1"/>
</dbReference>
<dbReference type="RefSeq" id="NP_194876.2">
    <property type="nucleotide sequence ID" value="NM_119297.4"/>
</dbReference>
<dbReference type="SMR" id="Q9SV21"/>
<dbReference type="BioGRID" id="14561">
    <property type="interactions" value="28"/>
</dbReference>
<dbReference type="FunCoup" id="Q9SV21">
    <property type="interactions" value="5263"/>
</dbReference>
<dbReference type="STRING" id="3702.Q9SV21"/>
<dbReference type="iPTMnet" id="Q9SV21"/>
<dbReference type="PaxDb" id="3702-AT4G31480.2"/>
<dbReference type="ProteomicsDB" id="240944"/>
<dbReference type="EnsemblPlants" id="AT4G31480.1">
    <property type="protein sequence ID" value="AT4G31480.1"/>
    <property type="gene ID" value="AT4G31480"/>
</dbReference>
<dbReference type="EnsemblPlants" id="AT4G31480.2">
    <property type="protein sequence ID" value="AT4G31480.2"/>
    <property type="gene ID" value="AT4G31480"/>
</dbReference>
<dbReference type="EnsemblPlants" id="AT4G31480.4">
    <property type="protein sequence ID" value="AT4G31480.4"/>
    <property type="gene ID" value="AT4G31480"/>
</dbReference>
<dbReference type="EnsemblPlants" id="AT4G31480.5">
    <property type="protein sequence ID" value="AT4G31480.5"/>
    <property type="gene ID" value="AT4G31480"/>
</dbReference>
<dbReference type="EnsemblPlants" id="AT4G31480.7">
    <property type="protein sequence ID" value="AT4G31480.7"/>
    <property type="gene ID" value="AT4G31480"/>
</dbReference>
<dbReference type="EnsemblPlants" id="AT4G31480.8">
    <property type="protein sequence ID" value="AT4G31480.8"/>
    <property type="gene ID" value="AT4G31480"/>
</dbReference>
<dbReference type="EnsemblPlants" id="AT4G31480.9">
    <property type="protein sequence ID" value="AT4G31480.9"/>
    <property type="gene ID" value="AT4G31480"/>
</dbReference>
<dbReference type="GeneID" id="829275"/>
<dbReference type="Gramene" id="AT4G31480.1">
    <property type="protein sequence ID" value="AT4G31480.1"/>
    <property type="gene ID" value="AT4G31480"/>
</dbReference>
<dbReference type="Gramene" id="AT4G31480.2">
    <property type="protein sequence ID" value="AT4G31480.2"/>
    <property type="gene ID" value="AT4G31480"/>
</dbReference>
<dbReference type="Gramene" id="AT4G31480.4">
    <property type="protein sequence ID" value="AT4G31480.4"/>
    <property type="gene ID" value="AT4G31480"/>
</dbReference>
<dbReference type="Gramene" id="AT4G31480.5">
    <property type="protein sequence ID" value="AT4G31480.5"/>
    <property type="gene ID" value="AT4G31480"/>
</dbReference>
<dbReference type="Gramene" id="AT4G31480.7">
    <property type="protein sequence ID" value="AT4G31480.7"/>
    <property type="gene ID" value="AT4G31480"/>
</dbReference>
<dbReference type="Gramene" id="AT4G31480.8">
    <property type="protein sequence ID" value="AT4G31480.8"/>
    <property type="gene ID" value="AT4G31480"/>
</dbReference>
<dbReference type="Gramene" id="AT4G31480.9">
    <property type="protein sequence ID" value="AT4G31480.9"/>
    <property type="gene ID" value="AT4G31480"/>
</dbReference>
<dbReference type="KEGG" id="ath:AT4G31480"/>
<dbReference type="Araport" id="AT4G31480"/>
<dbReference type="TAIR" id="AT4G31480"/>
<dbReference type="eggNOG" id="KOG1058">
    <property type="taxonomic scope" value="Eukaryota"/>
</dbReference>
<dbReference type="HOGENOM" id="CLU_006949_0_0_1"/>
<dbReference type="InParanoid" id="Q9SV21"/>
<dbReference type="OrthoDB" id="10261439at2759"/>
<dbReference type="PhylomeDB" id="Q9SV21"/>
<dbReference type="PRO" id="PR:Q9SV21"/>
<dbReference type="Proteomes" id="UP000006548">
    <property type="component" value="Chromosome 4"/>
</dbReference>
<dbReference type="ExpressionAtlas" id="Q9SV21">
    <property type="expression patterns" value="baseline and differential"/>
</dbReference>
<dbReference type="GO" id="GO:0030126">
    <property type="term" value="C:COPI vesicle coat"/>
    <property type="evidence" value="ECO:0007669"/>
    <property type="project" value="InterPro"/>
</dbReference>
<dbReference type="GO" id="GO:0000139">
    <property type="term" value="C:Golgi membrane"/>
    <property type="evidence" value="ECO:0007669"/>
    <property type="project" value="UniProtKB-SubCell"/>
</dbReference>
<dbReference type="GO" id="GO:0005886">
    <property type="term" value="C:plasma membrane"/>
    <property type="evidence" value="ECO:0007005"/>
    <property type="project" value="TAIR"/>
</dbReference>
<dbReference type="GO" id="GO:0009506">
    <property type="term" value="C:plasmodesma"/>
    <property type="evidence" value="ECO:0007005"/>
    <property type="project" value="TAIR"/>
</dbReference>
<dbReference type="GO" id="GO:0005198">
    <property type="term" value="F:structural molecule activity"/>
    <property type="evidence" value="ECO:0007669"/>
    <property type="project" value="InterPro"/>
</dbReference>
<dbReference type="GO" id="GO:0006886">
    <property type="term" value="P:intracellular protein transport"/>
    <property type="evidence" value="ECO:0007669"/>
    <property type="project" value="InterPro"/>
</dbReference>
<dbReference type="GO" id="GO:0016192">
    <property type="term" value="P:vesicle-mediated transport"/>
    <property type="evidence" value="ECO:0007669"/>
    <property type="project" value="UniProtKB-KW"/>
</dbReference>
<dbReference type="FunFam" id="1.25.10.10:FF:000166">
    <property type="entry name" value="Coatomer subunit beta"/>
    <property type="match status" value="1"/>
</dbReference>
<dbReference type="Gene3D" id="1.25.10.10">
    <property type="entry name" value="Leucine-rich Repeat Variant"/>
    <property type="match status" value="1"/>
</dbReference>
<dbReference type="InterPro" id="IPR011989">
    <property type="entry name" value="ARM-like"/>
</dbReference>
<dbReference type="InterPro" id="IPR016024">
    <property type="entry name" value="ARM-type_fold"/>
</dbReference>
<dbReference type="InterPro" id="IPR002553">
    <property type="entry name" value="Clathrin/coatomer_adapt-like_N"/>
</dbReference>
<dbReference type="InterPro" id="IPR011710">
    <property type="entry name" value="Coatomer_bsu_C"/>
</dbReference>
<dbReference type="InterPro" id="IPR016460">
    <property type="entry name" value="COPB1"/>
</dbReference>
<dbReference type="InterPro" id="IPR029446">
    <property type="entry name" value="COPB1_appendage_platform_dom"/>
</dbReference>
<dbReference type="PANTHER" id="PTHR10635">
    <property type="entry name" value="COATOMER SUBUNIT BETA"/>
    <property type="match status" value="1"/>
</dbReference>
<dbReference type="PANTHER" id="PTHR10635:SF0">
    <property type="entry name" value="COATOMER SUBUNIT BETA"/>
    <property type="match status" value="1"/>
</dbReference>
<dbReference type="Pfam" id="PF01602">
    <property type="entry name" value="Adaptin_N"/>
    <property type="match status" value="1"/>
</dbReference>
<dbReference type="Pfam" id="PF07718">
    <property type="entry name" value="Coatamer_beta_C"/>
    <property type="match status" value="1"/>
</dbReference>
<dbReference type="Pfam" id="PF14806">
    <property type="entry name" value="Coatomer_b_Cpla"/>
    <property type="match status" value="1"/>
</dbReference>
<dbReference type="PIRSF" id="PIRSF005727">
    <property type="entry name" value="Coatomer_beta_subunit"/>
    <property type="match status" value="1"/>
</dbReference>
<dbReference type="SUPFAM" id="SSF48371">
    <property type="entry name" value="ARM repeat"/>
    <property type="match status" value="1"/>
</dbReference>
<evidence type="ECO:0000250" key="1"/>
<evidence type="ECO:0000305" key="2"/>
<name>COPB1_ARATH</name>